<gene>
    <name evidence="1" type="primary">gpsA</name>
    <name type="ordered locus">FTM_0460</name>
</gene>
<accession>B2SF49</accession>
<organism>
    <name type="scientific">Francisella tularensis subsp. mediasiatica (strain FSC147)</name>
    <dbReference type="NCBI Taxonomy" id="441952"/>
    <lineage>
        <taxon>Bacteria</taxon>
        <taxon>Pseudomonadati</taxon>
        <taxon>Pseudomonadota</taxon>
        <taxon>Gammaproteobacteria</taxon>
        <taxon>Thiotrichales</taxon>
        <taxon>Francisellaceae</taxon>
        <taxon>Francisella</taxon>
    </lineage>
</organism>
<proteinExistence type="inferred from homology"/>
<name>GPDA_FRATM</name>
<evidence type="ECO:0000255" key="1">
    <source>
        <dbReference type="HAMAP-Rule" id="MF_00394"/>
    </source>
</evidence>
<comment type="function">
    <text evidence="1">Catalyzes the reduction of the glycolytic intermediate dihydroxyacetone phosphate (DHAP) to sn-glycerol 3-phosphate (G3P), the key precursor for phospholipid synthesis.</text>
</comment>
<comment type="catalytic activity">
    <reaction evidence="1">
        <text>sn-glycerol 3-phosphate + NAD(+) = dihydroxyacetone phosphate + NADH + H(+)</text>
        <dbReference type="Rhea" id="RHEA:11092"/>
        <dbReference type="ChEBI" id="CHEBI:15378"/>
        <dbReference type="ChEBI" id="CHEBI:57540"/>
        <dbReference type="ChEBI" id="CHEBI:57597"/>
        <dbReference type="ChEBI" id="CHEBI:57642"/>
        <dbReference type="ChEBI" id="CHEBI:57945"/>
        <dbReference type="EC" id="1.1.1.94"/>
    </reaction>
    <physiologicalReaction direction="right-to-left" evidence="1">
        <dbReference type="Rhea" id="RHEA:11094"/>
    </physiologicalReaction>
</comment>
<comment type="catalytic activity">
    <reaction evidence="1">
        <text>sn-glycerol 3-phosphate + NADP(+) = dihydroxyacetone phosphate + NADPH + H(+)</text>
        <dbReference type="Rhea" id="RHEA:11096"/>
        <dbReference type="ChEBI" id="CHEBI:15378"/>
        <dbReference type="ChEBI" id="CHEBI:57597"/>
        <dbReference type="ChEBI" id="CHEBI:57642"/>
        <dbReference type="ChEBI" id="CHEBI:57783"/>
        <dbReference type="ChEBI" id="CHEBI:58349"/>
        <dbReference type="EC" id="1.1.1.94"/>
    </reaction>
    <physiologicalReaction direction="right-to-left" evidence="1">
        <dbReference type="Rhea" id="RHEA:11098"/>
    </physiologicalReaction>
</comment>
<comment type="pathway">
    <text evidence="1">Membrane lipid metabolism; glycerophospholipid metabolism.</text>
</comment>
<comment type="subcellular location">
    <subcellularLocation>
        <location evidence="1">Cytoplasm</location>
    </subcellularLocation>
</comment>
<comment type="similarity">
    <text evidence="1">Belongs to the NAD-dependent glycerol-3-phosphate dehydrogenase family.</text>
</comment>
<feature type="chain" id="PRO_1000190151" description="Glycerol-3-phosphate dehydrogenase [NAD(P)+]">
    <location>
        <begin position="1"/>
        <end position="332"/>
    </location>
</feature>
<feature type="active site" description="Proton acceptor" evidence="1">
    <location>
        <position position="191"/>
    </location>
</feature>
<feature type="binding site" evidence="1">
    <location>
        <position position="13"/>
    </location>
    <ligand>
        <name>NADPH</name>
        <dbReference type="ChEBI" id="CHEBI:57783"/>
    </ligand>
</feature>
<feature type="binding site" evidence="1">
    <location>
        <position position="34"/>
    </location>
    <ligand>
        <name>NADPH</name>
        <dbReference type="ChEBI" id="CHEBI:57783"/>
    </ligand>
</feature>
<feature type="binding site" evidence="1">
    <location>
        <position position="108"/>
    </location>
    <ligand>
        <name>NADPH</name>
        <dbReference type="ChEBI" id="CHEBI:57783"/>
    </ligand>
</feature>
<feature type="binding site" evidence="1">
    <location>
        <position position="108"/>
    </location>
    <ligand>
        <name>sn-glycerol 3-phosphate</name>
        <dbReference type="ChEBI" id="CHEBI:57597"/>
    </ligand>
</feature>
<feature type="binding site" evidence="1">
    <location>
        <position position="136"/>
    </location>
    <ligand>
        <name>sn-glycerol 3-phosphate</name>
        <dbReference type="ChEBI" id="CHEBI:57597"/>
    </ligand>
</feature>
<feature type="binding site" evidence="1">
    <location>
        <position position="138"/>
    </location>
    <ligand>
        <name>sn-glycerol 3-phosphate</name>
        <dbReference type="ChEBI" id="CHEBI:57597"/>
    </ligand>
</feature>
<feature type="binding site" evidence="1">
    <location>
        <position position="140"/>
    </location>
    <ligand>
        <name>NADPH</name>
        <dbReference type="ChEBI" id="CHEBI:57783"/>
    </ligand>
</feature>
<feature type="binding site" evidence="1">
    <location>
        <position position="191"/>
    </location>
    <ligand>
        <name>sn-glycerol 3-phosphate</name>
        <dbReference type="ChEBI" id="CHEBI:57597"/>
    </ligand>
</feature>
<feature type="binding site" evidence="1">
    <location>
        <position position="244"/>
    </location>
    <ligand>
        <name>sn-glycerol 3-phosphate</name>
        <dbReference type="ChEBI" id="CHEBI:57597"/>
    </ligand>
</feature>
<feature type="binding site" evidence="1">
    <location>
        <position position="254"/>
    </location>
    <ligand>
        <name>sn-glycerol 3-phosphate</name>
        <dbReference type="ChEBI" id="CHEBI:57597"/>
    </ligand>
</feature>
<feature type="binding site" evidence="1">
    <location>
        <position position="255"/>
    </location>
    <ligand>
        <name>NADPH</name>
        <dbReference type="ChEBI" id="CHEBI:57783"/>
    </ligand>
</feature>
<feature type="binding site" evidence="1">
    <location>
        <position position="255"/>
    </location>
    <ligand>
        <name>sn-glycerol 3-phosphate</name>
        <dbReference type="ChEBI" id="CHEBI:57597"/>
    </ligand>
</feature>
<feature type="binding site" evidence="1">
    <location>
        <position position="256"/>
    </location>
    <ligand>
        <name>sn-glycerol 3-phosphate</name>
        <dbReference type="ChEBI" id="CHEBI:57597"/>
    </ligand>
</feature>
<feature type="binding site" evidence="1">
    <location>
        <position position="279"/>
    </location>
    <ligand>
        <name>NADPH</name>
        <dbReference type="ChEBI" id="CHEBI:57783"/>
    </ligand>
</feature>
<feature type="binding site" evidence="1">
    <location>
        <position position="281"/>
    </location>
    <ligand>
        <name>NADPH</name>
        <dbReference type="ChEBI" id="CHEBI:57783"/>
    </ligand>
</feature>
<protein>
    <recommendedName>
        <fullName evidence="1">Glycerol-3-phosphate dehydrogenase [NAD(P)+]</fullName>
        <ecNumber evidence="1">1.1.1.94</ecNumber>
    </recommendedName>
    <alternativeName>
        <fullName evidence="1">NAD(P)(+)-dependent glycerol-3-phosphate dehydrogenase</fullName>
    </alternativeName>
    <alternativeName>
        <fullName evidence="1">NAD(P)H-dependent dihydroxyacetone-phosphate reductase</fullName>
    </alternativeName>
</protein>
<sequence length="332" mass="36630">MQKNILVLGAGAWGTALALQLAYRGHNVRINSWKAEHNEQMLEDNNNHKYLPSIEKFPSRLKAIQDWQANIIEFDSILVATPSSGFKNTVLELKECILPQQNIISATKGFCHDSYALLSEIAEDILPTTKFALLTGPSFAKELANQLPTAVVVASKDINYARYVQELFSNENFRCYTTTDIIGAQVGGAVKNVLAITAGIAAGMEFGVNAHAALITRGLAEIKKLGLKLGANSETFIGLSCLGDLLLTCSDNQSRNRRFGLYLGQGMTIQQALKEVNNVVEGYFTAKAVYNLAKKHNVEMPLVFATYRILYEAADPRDIVKELMTRQLKNEN</sequence>
<dbReference type="EC" id="1.1.1.94" evidence="1"/>
<dbReference type="EMBL" id="CP000915">
    <property type="protein sequence ID" value="ACD30481.1"/>
    <property type="molecule type" value="Genomic_DNA"/>
</dbReference>
<dbReference type="SMR" id="B2SF49"/>
<dbReference type="KEGG" id="ftm:FTM_0460"/>
<dbReference type="HOGENOM" id="CLU_033449_0_2_6"/>
<dbReference type="UniPathway" id="UPA00940"/>
<dbReference type="GO" id="GO:0005829">
    <property type="term" value="C:cytosol"/>
    <property type="evidence" value="ECO:0007669"/>
    <property type="project" value="TreeGrafter"/>
</dbReference>
<dbReference type="GO" id="GO:0047952">
    <property type="term" value="F:glycerol-3-phosphate dehydrogenase [NAD(P)+] activity"/>
    <property type="evidence" value="ECO:0007669"/>
    <property type="project" value="UniProtKB-UniRule"/>
</dbReference>
<dbReference type="GO" id="GO:0051287">
    <property type="term" value="F:NAD binding"/>
    <property type="evidence" value="ECO:0007669"/>
    <property type="project" value="InterPro"/>
</dbReference>
<dbReference type="GO" id="GO:0005975">
    <property type="term" value="P:carbohydrate metabolic process"/>
    <property type="evidence" value="ECO:0007669"/>
    <property type="project" value="InterPro"/>
</dbReference>
<dbReference type="GO" id="GO:0046167">
    <property type="term" value="P:glycerol-3-phosphate biosynthetic process"/>
    <property type="evidence" value="ECO:0007669"/>
    <property type="project" value="UniProtKB-UniRule"/>
</dbReference>
<dbReference type="GO" id="GO:0046168">
    <property type="term" value="P:glycerol-3-phosphate catabolic process"/>
    <property type="evidence" value="ECO:0007669"/>
    <property type="project" value="InterPro"/>
</dbReference>
<dbReference type="GO" id="GO:0046474">
    <property type="term" value="P:glycerophospholipid biosynthetic process"/>
    <property type="evidence" value="ECO:0007669"/>
    <property type="project" value="TreeGrafter"/>
</dbReference>
<dbReference type="FunFam" id="1.10.1040.10:FF:000001">
    <property type="entry name" value="Glycerol-3-phosphate dehydrogenase [NAD(P)+]"/>
    <property type="match status" value="1"/>
</dbReference>
<dbReference type="FunFam" id="3.40.50.720:FF:000019">
    <property type="entry name" value="Glycerol-3-phosphate dehydrogenase [NAD(P)+]"/>
    <property type="match status" value="1"/>
</dbReference>
<dbReference type="Gene3D" id="1.10.1040.10">
    <property type="entry name" value="N-(1-d-carboxylethyl)-l-norvaline Dehydrogenase, domain 2"/>
    <property type="match status" value="1"/>
</dbReference>
<dbReference type="Gene3D" id="3.40.50.720">
    <property type="entry name" value="NAD(P)-binding Rossmann-like Domain"/>
    <property type="match status" value="1"/>
</dbReference>
<dbReference type="HAMAP" id="MF_00394">
    <property type="entry name" value="NAD_Glyc3P_dehydrog"/>
    <property type="match status" value="1"/>
</dbReference>
<dbReference type="InterPro" id="IPR008927">
    <property type="entry name" value="6-PGluconate_DH-like_C_sf"/>
</dbReference>
<dbReference type="InterPro" id="IPR013328">
    <property type="entry name" value="6PGD_dom2"/>
</dbReference>
<dbReference type="InterPro" id="IPR006168">
    <property type="entry name" value="G3P_DH_NAD-dep"/>
</dbReference>
<dbReference type="InterPro" id="IPR006109">
    <property type="entry name" value="G3P_DH_NAD-dep_C"/>
</dbReference>
<dbReference type="InterPro" id="IPR011128">
    <property type="entry name" value="G3P_DH_NAD-dep_N"/>
</dbReference>
<dbReference type="InterPro" id="IPR036291">
    <property type="entry name" value="NAD(P)-bd_dom_sf"/>
</dbReference>
<dbReference type="NCBIfam" id="NF000940">
    <property type="entry name" value="PRK00094.1-2"/>
    <property type="match status" value="1"/>
</dbReference>
<dbReference type="NCBIfam" id="NF000942">
    <property type="entry name" value="PRK00094.1-4"/>
    <property type="match status" value="1"/>
</dbReference>
<dbReference type="PANTHER" id="PTHR11728">
    <property type="entry name" value="GLYCEROL-3-PHOSPHATE DEHYDROGENASE"/>
    <property type="match status" value="1"/>
</dbReference>
<dbReference type="PANTHER" id="PTHR11728:SF1">
    <property type="entry name" value="GLYCEROL-3-PHOSPHATE DEHYDROGENASE [NAD(+)] 2, CHLOROPLASTIC"/>
    <property type="match status" value="1"/>
</dbReference>
<dbReference type="Pfam" id="PF07479">
    <property type="entry name" value="NAD_Gly3P_dh_C"/>
    <property type="match status" value="1"/>
</dbReference>
<dbReference type="Pfam" id="PF01210">
    <property type="entry name" value="NAD_Gly3P_dh_N"/>
    <property type="match status" value="1"/>
</dbReference>
<dbReference type="PIRSF" id="PIRSF000114">
    <property type="entry name" value="Glycerol-3-P_dh"/>
    <property type="match status" value="1"/>
</dbReference>
<dbReference type="PRINTS" id="PR00077">
    <property type="entry name" value="GPDHDRGNASE"/>
</dbReference>
<dbReference type="SUPFAM" id="SSF48179">
    <property type="entry name" value="6-phosphogluconate dehydrogenase C-terminal domain-like"/>
    <property type="match status" value="1"/>
</dbReference>
<dbReference type="SUPFAM" id="SSF51735">
    <property type="entry name" value="NAD(P)-binding Rossmann-fold domains"/>
    <property type="match status" value="1"/>
</dbReference>
<dbReference type="PROSITE" id="PS00957">
    <property type="entry name" value="NAD_G3PDH"/>
    <property type="match status" value="1"/>
</dbReference>
<reference key="1">
    <citation type="journal article" date="2009" name="PLoS Pathog.">
        <title>Molecular evolutionary consequences of niche restriction in Francisella tularensis, a facultative intracellular pathogen.</title>
        <authorList>
            <person name="Larsson P."/>
            <person name="Elfsmark D."/>
            <person name="Svensson K."/>
            <person name="Wikstroem P."/>
            <person name="Forsman M."/>
            <person name="Brettin T."/>
            <person name="Keim P."/>
            <person name="Johansson A."/>
        </authorList>
    </citation>
    <scope>NUCLEOTIDE SEQUENCE [LARGE SCALE GENOMIC DNA]</scope>
    <source>
        <strain>FSC147</strain>
    </source>
</reference>
<keyword id="KW-0963">Cytoplasm</keyword>
<keyword id="KW-0444">Lipid biosynthesis</keyword>
<keyword id="KW-0443">Lipid metabolism</keyword>
<keyword id="KW-0520">NAD</keyword>
<keyword id="KW-0521">NADP</keyword>
<keyword id="KW-0547">Nucleotide-binding</keyword>
<keyword id="KW-0560">Oxidoreductase</keyword>
<keyword id="KW-0594">Phospholipid biosynthesis</keyword>
<keyword id="KW-1208">Phospholipid metabolism</keyword>